<evidence type="ECO:0000255" key="1">
    <source>
        <dbReference type="HAMAP-Rule" id="MF_00172"/>
    </source>
</evidence>
<proteinExistence type="inferred from homology"/>
<reference key="1">
    <citation type="journal article" date="2007" name="J. Bacteriol.">
        <title>The genome sequence of avian pathogenic Escherichia coli strain O1:K1:H7 shares strong similarities with human extraintestinal pathogenic E. coli genomes.</title>
        <authorList>
            <person name="Johnson T.J."/>
            <person name="Kariyawasam S."/>
            <person name="Wannemuehler Y."/>
            <person name="Mangiamele P."/>
            <person name="Johnson S.J."/>
            <person name="Doetkott C."/>
            <person name="Skyberg J.A."/>
            <person name="Lynne A.M."/>
            <person name="Johnson J.R."/>
            <person name="Nolan L.K."/>
        </authorList>
    </citation>
    <scope>NUCLEOTIDE SEQUENCE [LARGE SCALE GENOMIC DNA]</scope>
</reference>
<keyword id="KW-0028">Amino-acid biosynthesis</keyword>
<keyword id="KW-0479">Metal-binding</keyword>
<keyword id="KW-0486">Methionine biosynthesis</keyword>
<keyword id="KW-0489">Methyltransferase</keyword>
<keyword id="KW-1185">Reference proteome</keyword>
<keyword id="KW-0677">Repeat</keyword>
<keyword id="KW-0808">Transferase</keyword>
<keyword id="KW-0862">Zinc</keyword>
<feature type="chain" id="PRO_1000017240" description="5-methyltetrahydropteroyltriglutamate--homocysteine methyltransferase">
    <location>
        <begin position="1"/>
        <end position="753"/>
    </location>
</feature>
<feature type="active site" description="Proton donor" evidence="1">
    <location>
        <position position="694"/>
    </location>
</feature>
<feature type="binding site" evidence="1">
    <location>
        <begin position="17"/>
        <end position="20"/>
    </location>
    <ligand>
        <name>5-methyltetrahydropteroyltri-L-glutamate</name>
        <dbReference type="ChEBI" id="CHEBI:58207"/>
    </ligand>
</feature>
<feature type="binding site" evidence="1">
    <location>
        <position position="117"/>
    </location>
    <ligand>
        <name>5-methyltetrahydropteroyltri-L-glutamate</name>
        <dbReference type="ChEBI" id="CHEBI:58207"/>
    </ligand>
</feature>
<feature type="binding site" evidence="1">
    <location>
        <begin position="431"/>
        <end position="433"/>
    </location>
    <ligand>
        <name>L-homocysteine</name>
        <dbReference type="ChEBI" id="CHEBI:58199"/>
    </ligand>
</feature>
<feature type="binding site" evidence="1">
    <location>
        <begin position="431"/>
        <end position="433"/>
    </location>
    <ligand>
        <name>L-methionine</name>
        <dbReference type="ChEBI" id="CHEBI:57844"/>
    </ligand>
</feature>
<feature type="binding site" evidence="1">
    <location>
        <position position="484"/>
    </location>
    <ligand>
        <name>L-homocysteine</name>
        <dbReference type="ChEBI" id="CHEBI:58199"/>
    </ligand>
</feature>
<feature type="binding site" evidence="1">
    <location>
        <position position="484"/>
    </location>
    <ligand>
        <name>L-methionine</name>
        <dbReference type="ChEBI" id="CHEBI:57844"/>
    </ligand>
</feature>
<feature type="binding site" evidence="1">
    <location>
        <begin position="515"/>
        <end position="516"/>
    </location>
    <ligand>
        <name>5-methyltetrahydropteroyltri-L-glutamate</name>
        <dbReference type="ChEBI" id="CHEBI:58207"/>
    </ligand>
</feature>
<feature type="binding site" evidence="1">
    <location>
        <position position="561"/>
    </location>
    <ligand>
        <name>5-methyltetrahydropteroyltri-L-glutamate</name>
        <dbReference type="ChEBI" id="CHEBI:58207"/>
    </ligand>
</feature>
<feature type="binding site" evidence="1">
    <location>
        <position position="599"/>
    </location>
    <ligand>
        <name>L-homocysteine</name>
        <dbReference type="ChEBI" id="CHEBI:58199"/>
    </ligand>
</feature>
<feature type="binding site" evidence="1">
    <location>
        <position position="599"/>
    </location>
    <ligand>
        <name>L-methionine</name>
        <dbReference type="ChEBI" id="CHEBI:57844"/>
    </ligand>
</feature>
<feature type="binding site" evidence="1">
    <location>
        <position position="605"/>
    </location>
    <ligand>
        <name>5-methyltetrahydropteroyltri-L-glutamate</name>
        <dbReference type="ChEBI" id="CHEBI:58207"/>
    </ligand>
</feature>
<feature type="binding site" evidence="1">
    <location>
        <position position="641"/>
    </location>
    <ligand>
        <name>Zn(2+)</name>
        <dbReference type="ChEBI" id="CHEBI:29105"/>
        <note>catalytic</note>
    </ligand>
</feature>
<feature type="binding site" evidence="1">
    <location>
        <position position="643"/>
    </location>
    <ligand>
        <name>Zn(2+)</name>
        <dbReference type="ChEBI" id="CHEBI:29105"/>
        <note>catalytic</note>
    </ligand>
</feature>
<feature type="binding site" evidence="1">
    <location>
        <position position="665"/>
    </location>
    <ligand>
        <name>Zn(2+)</name>
        <dbReference type="ChEBI" id="CHEBI:29105"/>
        <note>catalytic</note>
    </ligand>
</feature>
<feature type="binding site" evidence="1">
    <location>
        <position position="726"/>
    </location>
    <ligand>
        <name>Zn(2+)</name>
        <dbReference type="ChEBI" id="CHEBI:29105"/>
        <note>catalytic</note>
    </ligand>
</feature>
<name>METE_ECOK1</name>
<protein>
    <recommendedName>
        <fullName evidence="1">5-methyltetrahydropteroyltriglutamate--homocysteine methyltransferase</fullName>
        <ecNumber evidence="1">2.1.1.14</ecNumber>
    </recommendedName>
    <alternativeName>
        <fullName evidence="1">Cobalamin-independent methionine synthase</fullName>
    </alternativeName>
    <alternativeName>
        <fullName evidence="1">Methionine synthase, vitamin-B12 independent isozyme</fullName>
    </alternativeName>
</protein>
<gene>
    <name evidence="1" type="primary">metE</name>
    <name type="ordered locus">Ecok1_37930</name>
    <name type="ORF">APECO1_2647</name>
</gene>
<accession>A1AHZ7</accession>
<comment type="function">
    <text evidence="1">Catalyzes the transfer of a methyl group from 5-methyltetrahydrofolate to homocysteine resulting in methionine formation.</text>
</comment>
<comment type="catalytic activity">
    <reaction evidence="1">
        <text>5-methyltetrahydropteroyltri-L-glutamate + L-homocysteine = tetrahydropteroyltri-L-glutamate + L-methionine</text>
        <dbReference type="Rhea" id="RHEA:21196"/>
        <dbReference type="ChEBI" id="CHEBI:57844"/>
        <dbReference type="ChEBI" id="CHEBI:58140"/>
        <dbReference type="ChEBI" id="CHEBI:58199"/>
        <dbReference type="ChEBI" id="CHEBI:58207"/>
        <dbReference type="EC" id="2.1.1.14"/>
    </reaction>
</comment>
<comment type="cofactor">
    <cofactor evidence="1">
        <name>Zn(2+)</name>
        <dbReference type="ChEBI" id="CHEBI:29105"/>
    </cofactor>
    <text evidence="1">Binds 1 zinc ion per subunit.</text>
</comment>
<comment type="pathway">
    <text evidence="1">Amino-acid biosynthesis; L-methionine biosynthesis via de novo pathway; L-methionine from L-homocysteine (MetE route): step 1/1.</text>
</comment>
<comment type="similarity">
    <text evidence="1">Belongs to the vitamin-B12 independent methionine synthase family.</text>
</comment>
<organism>
    <name type="scientific">Escherichia coli O1:K1 / APEC</name>
    <dbReference type="NCBI Taxonomy" id="405955"/>
    <lineage>
        <taxon>Bacteria</taxon>
        <taxon>Pseudomonadati</taxon>
        <taxon>Pseudomonadota</taxon>
        <taxon>Gammaproteobacteria</taxon>
        <taxon>Enterobacterales</taxon>
        <taxon>Enterobacteriaceae</taxon>
        <taxon>Escherichia</taxon>
    </lineage>
</organism>
<dbReference type="EC" id="2.1.1.14" evidence="1"/>
<dbReference type="EMBL" id="CP000468">
    <property type="protein sequence ID" value="ABJ03287.1"/>
    <property type="molecule type" value="Genomic_DNA"/>
</dbReference>
<dbReference type="RefSeq" id="WP_000152593.1">
    <property type="nucleotide sequence ID" value="NC_008563.1"/>
</dbReference>
<dbReference type="SMR" id="A1AHZ7"/>
<dbReference type="KEGG" id="ecv:APECO1_2647"/>
<dbReference type="HOGENOM" id="CLU_013175_0_0_6"/>
<dbReference type="UniPathway" id="UPA00051">
    <property type="reaction ID" value="UER00082"/>
</dbReference>
<dbReference type="Proteomes" id="UP000008216">
    <property type="component" value="Chromosome"/>
</dbReference>
<dbReference type="GO" id="GO:0003871">
    <property type="term" value="F:5-methyltetrahydropteroyltriglutamate-homocysteine S-methyltransferase activity"/>
    <property type="evidence" value="ECO:0007669"/>
    <property type="project" value="UniProtKB-UniRule"/>
</dbReference>
<dbReference type="GO" id="GO:0008270">
    <property type="term" value="F:zinc ion binding"/>
    <property type="evidence" value="ECO:0007669"/>
    <property type="project" value="InterPro"/>
</dbReference>
<dbReference type="GO" id="GO:0009086">
    <property type="term" value="P:methionine biosynthetic process"/>
    <property type="evidence" value="ECO:0007669"/>
    <property type="project" value="UniProtKB-UniRule"/>
</dbReference>
<dbReference type="GO" id="GO:0032259">
    <property type="term" value="P:methylation"/>
    <property type="evidence" value="ECO:0007669"/>
    <property type="project" value="UniProtKB-KW"/>
</dbReference>
<dbReference type="CDD" id="cd03311">
    <property type="entry name" value="CIMS_C_terminal_like"/>
    <property type="match status" value="1"/>
</dbReference>
<dbReference type="CDD" id="cd03312">
    <property type="entry name" value="CIMS_N_terminal_like"/>
    <property type="match status" value="1"/>
</dbReference>
<dbReference type="FunFam" id="3.20.20.210:FF:000002">
    <property type="entry name" value="5-methyltetrahydropteroyltriglutamate--homocysteine methyltransferase"/>
    <property type="match status" value="1"/>
</dbReference>
<dbReference type="FunFam" id="3.20.20.210:FF:000003">
    <property type="entry name" value="5-methyltetrahydropteroyltriglutamate--homocysteine methyltransferase"/>
    <property type="match status" value="1"/>
</dbReference>
<dbReference type="Gene3D" id="3.20.20.210">
    <property type="match status" value="2"/>
</dbReference>
<dbReference type="HAMAP" id="MF_00172">
    <property type="entry name" value="Meth_synth"/>
    <property type="match status" value="1"/>
</dbReference>
<dbReference type="InterPro" id="IPR013215">
    <property type="entry name" value="Cbl-indep_Met_Synth_N"/>
</dbReference>
<dbReference type="InterPro" id="IPR006276">
    <property type="entry name" value="Cobalamin-indep_Met_synthase"/>
</dbReference>
<dbReference type="InterPro" id="IPR002629">
    <property type="entry name" value="Met_Synth_C/arc"/>
</dbReference>
<dbReference type="InterPro" id="IPR038071">
    <property type="entry name" value="UROD/MetE-like_sf"/>
</dbReference>
<dbReference type="NCBIfam" id="TIGR01371">
    <property type="entry name" value="met_syn_B12ind"/>
    <property type="match status" value="1"/>
</dbReference>
<dbReference type="NCBIfam" id="NF003556">
    <property type="entry name" value="PRK05222.1"/>
    <property type="match status" value="1"/>
</dbReference>
<dbReference type="PANTHER" id="PTHR30519">
    <property type="entry name" value="5-METHYLTETRAHYDROPTEROYLTRIGLUTAMATE--HOMOCYSTEINE METHYLTRANSFERASE"/>
    <property type="match status" value="1"/>
</dbReference>
<dbReference type="Pfam" id="PF08267">
    <property type="entry name" value="Meth_synt_1"/>
    <property type="match status" value="1"/>
</dbReference>
<dbReference type="Pfam" id="PF01717">
    <property type="entry name" value="Meth_synt_2"/>
    <property type="match status" value="1"/>
</dbReference>
<dbReference type="PIRSF" id="PIRSF000382">
    <property type="entry name" value="MeTrfase_B12_ind"/>
    <property type="match status" value="1"/>
</dbReference>
<dbReference type="SUPFAM" id="SSF51726">
    <property type="entry name" value="UROD/MetE-like"/>
    <property type="match status" value="2"/>
</dbReference>
<sequence length="753" mass="84707">MTIINHTLGFPRVGLRRELKKAQESYWAGNSTREELLAVGRELRARHWDQQKQAGIDLLPVGDFAWYDHVLTTSLLLGNVPQRHQNNDGSVDIDTLFRIGRGRAPTGEPAAAAEMTKWFNTNYHYMVPEFVKGQQFKLTWTQLLEEVDEALALGHKVKPVLLGPITYLWLGKVKGEQFDRLSLLNDILPVYQQVLAELAKRGIEWVQIDEPALVLELPQAWLNAYKPAYDALQGQVKLLLTTYFEGVTPNLDTITALPVQGLHVDLVHGKDDVAELHKRLPSDWLLSAGLINGRNVWRADLTEKYAQIKDIVGKRDLWVASSCSLLHSPIDLSVETRLDAEVKSWFAFALQKCHELALLRDALNSGDTAALAEWSAPIQARRHSTRVHNPAVEKRLAAITAQDSQRANVYEVRAEAQRARFKLPAWPTTTIGSFPQTTEIRTLRLDFKKGNLDANNYRTGIAEHIKQAIVEQERLGLDVLVHGEAERNDMVEYFGEHLDGFVFTQNGWVQSYGSRCVKPPIVIGDVSRPAPITVEWAKYAQSLTDKPVKGMLTGPVTILCWSFPREDVSRETIAKQIALALRDEVADLEAAGIGIIQIDEPALREGLPLRRSDWDAYLQWGVEAFRINAAVAKDDTQIHTHMCYCEFNDIMDSIAALDADVITIETSRSDMELLESFEEFDYPNEIGPGVYDIHSPNVPSVEWIEALLKKAAKRIPAERLWVNPDCGLKTRGWPETRAALANMVQAAQNLRRG</sequence>